<evidence type="ECO:0000255" key="1">
    <source>
        <dbReference type="HAMAP-Rule" id="MF_00133"/>
    </source>
</evidence>
<gene>
    <name evidence="1" type="primary">trpB</name>
    <name type="ordered locus">BF2650</name>
</gene>
<accession>Q64SX9</accession>
<proteinExistence type="inferred from homology"/>
<keyword id="KW-0028">Amino-acid biosynthesis</keyword>
<keyword id="KW-0057">Aromatic amino acid biosynthesis</keyword>
<keyword id="KW-0456">Lyase</keyword>
<keyword id="KW-0663">Pyridoxal phosphate</keyword>
<keyword id="KW-0822">Tryptophan biosynthesis</keyword>
<reference key="1">
    <citation type="journal article" date="2004" name="Proc. Natl. Acad. Sci. U.S.A.">
        <title>Genomic analysis of Bacteroides fragilis reveals extensive DNA inversions regulating cell surface adaptation.</title>
        <authorList>
            <person name="Kuwahara T."/>
            <person name="Yamashita A."/>
            <person name="Hirakawa H."/>
            <person name="Nakayama H."/>
            <person name="Toh H."/>
            <person name="Okada N."/>
            <person name="Kuhara S."/>
            <person name="Hattori M."/>
            <person name="Hayashi T."/>
            <person name="Ohnishi Y."/>
        </authorList>
    </citation>
    <scope>NUCLEOTIDE SEQUENCE [LARGE SCALE GENOMIC DNA]</scope>
    <source>
        <strain>YCH46</strain>
    </source>
</reference>
<feature type="chain" id="PRO_1000095776" description="Tryptophan synthase beta chain">
    <location>
        <begin position="1"/>
        <end position="390"/>
    </location>
</feature>
<feature type="modified residue" description="N6-(pyridoxal phosphate)lysine" evidence="1">
    <location>
        <position position="90"/>
    </location>
</feature>
<protein>
    <recommendedName>
        <fullName evidence="1">Tryptophan synthase beta chain</fullName>
        <ecNumber evidence="1">4.2.1.20</ecNumber>
    </recommendedName>
</protein>
<comment type="function">
    <text evidence="1">The beta subunit is responsible for the synthesis of L-tryptophan from indole and L-serine.</text>
</comment>
<comment type="catalytic activity">
    <reaction evidence="1">
        <text>(1S,2R)-1-C-(indol-3-yl)glycerol 3-phosphate + L-serine = D-glyceraldehyde 3-phosphate + L-tryptophan + H2O</text>
        <dbReference type="Rhea" id="RHEA:10532"/>
        <dbReference type="ChEBI" id="CHEBI:15377"/>
        <dbReference type="ChEBI" id="CHEBI:33384"/>
        <dbReference type="ChEBI" id="CHEBI:57912"/>
        <dbReference type="ChEBI" id="CHEBI:58866"/>
        <dbReference type="ChEBI" id="CHEBI:59776"/>
        <dbReference type="EC" id="4.2.1.20"/>
    </reaction>
</comment>
<comment type="cofactor">
    <cofactor evidence="1">
        <name>pyridoxal 5'-phosphate</name>
        <dbReference type="ChEBI" id="CHEBI:597326"/>
    </cofactor>
</comment>
<comment type="pathway">
    <text evidence="1">Amino-acid biosynthesis; L-tryptophan biosynthesis; L-tryptophan from chorismate: step 5/5.</text>
</comment>
<comment type="subunit">
    <text evidence="1">Tetramer of two alpha and two beta chains.</text>
</comment>
<comment type="similarity">
    <text evidence="1">Belongs to the TrpB family.</text>
</comment>
<name>TRPB_BACFR</name>
<organism>
    <name type="scientific">Bacteroides fragilis (strain YCH46)</name>
    <dbReference type="NCBI Taxonomy" id="295405"/>
    <lineage>
        <taxon>Bacteria</taxon>
        <taxon>Pseudomonadati</taxon>
        <taxon>Bacteroidota</taxon>
        <taxon>Bacteroidia</taxon>
        <taxon>Bacteroidales</taxon>
        <taxon>Bacteroidaceae</taxon>
        <taxon>Bacteroides</taxon>
    </lineage>
</organism>
<dbReference type="EC" id="4.2.1.20" evidence="1"/>
<dbReference type="EMBL" id="AP006841">
    <property type="protein sequence ID" value="BAD49400.1"/>
    <property type="molecule type" value="Genomic_DNA"/>
</dbReference>
<dbReference type="RefSeq" id="WP_005788278.1">
    <property type="nucleotide sequence ID" value="NZ_UYXF01000003.1"/>
</dbReference>
<dbReference type="RefSeq" id="YP_099934.1">
    <property type="nucleotide sequence ID" value="NC_006347.1"/>
</dbReference>
<dbReference type="SMR" id="Q64SX9"/>
<dbReference type="STRING" id="295405.BF2650"/>
<dbReference type="GeneID" id="60366390"/>
<dbReference type="KEGG" id="bfr:BF2650"/>
<dbReference type="PATRIC" id="fig|295405.11.peg.2561"/>
<dbReference type="HOGENOM" id="CLU_016734_3_1_10"/>
<dbReference type="OrthoDB" id="9766131at2"/>
<dbReference type="UniPathway" id="UPA00035">
    <property type="reaction ID" value="UER00044"/>
</dbReference>
<dbReference type="Proteomes" id="UP000002197">
    <property type="component" value="Chromosome"/>
</dbReference>
<dbReference type="GO" id="GO:0005737">
    <property type="term" value="C:cytoplasm"/>
    <property type="evidence" value="ECO:0007669"/>
    <property type="project" value="TreeGrafter"/>
</dbReference>
<dbReference type="GO" id="GO:0004834">
    <property type="term" value="F:tryptophan synthase activity"/>
    <property type="evidence" value="ECO:0007669"/>
    <property type="project" value="UniProtKB-UniRule"/>
</dbReference>
<dbReference type="CDD" id="cd06446">
    <property type="entry name" value="Trp-synth_B"/>
    <property type="match status" value="1"/>
</dbReference>
<dbReference type="FunFam" id="3.40.50.1100:FF:000004">
    <property type="entry name" value="Tryptophan synthase beta chain"/>
    <property type="match status" value="1"/>
</dbReference>
<dbReference type="Gene3D" id="3.40.50.1100">
    <property type="match status" value="2"/>
</dbReference>
<dbReference type="HAMAP" id="MF_00133">
    <property type="entry name" value="Trp_synth_beta"/>
    <property type="match status" value="1"/>
</dbReference>
<dbReference type="InterPro" id="IPR006653">
    <property type="entry name" value="Trp_synth_b_CS"/>
</dbReference>
<dbReference type="InterPro" id="IPR006654">
    <property type="entry name" value="Trp_synth_beta"/>
</dbReference>
<dbReference type="InterPro" id="IPR023026">
    <property type="entry name" value="Trp_synth_beta/beta-like"/>
</dbReference>
<dbReference type="InterPro" id="IPR001926">
    <property type="entry name" value="TrpB-like_PALP"/>
</dbReference>
<dbReference type="InterPro" id="IPR036052">
    <property type="entry name" value="TrpB-like_PALP_sf"/>
</dbReference>
<dbReference type="NCBIfam" id="TIGR00263">
    <property type="entry name" value="trpB"/>
    <property type="match status" value="1"/>
</dbReference>
<dbReference type="PANTHER" id="PTHR48077:SF3">
    <property type="entry name" value="TRYPTOPHAN SYNTHASE"/>
    <property type="match status" value="1"/>
</dbReference>
<dbReference type="PANTHER" id="PTHR48077">
    <property type="entry name" value="TRYPTOPHAN SYNTHASE-RELATED"/>
    <property type="match status" value="1"/>
</dbReference>
<dbReference type="Pfam" id="PF00291">
    <property type="entry name" value="PALP"/>
    <property type="match status" value="1"/>
</dbReference>
<dbReference type="PIRSF" id="PIRSF001413">
    <property type="entry name" value="Trp_syn_beta"/>
    <property type="match status" value="1"/>
</dbReference>
<dbReference type="SUPFAM" id="SSF53686">
    <property type="entry name" value="Tryptophan synthase beta subunit-like PLP-dependent enzymes"/>
    <property type="match status" value="1"/>
</dbReference>
<dbReference type="PROSITE" id="PS00168">
    <property type="entry name" value="TRP_SYNTHASE_BETA"/>
    <property type="match status" value="1"/>
</dbReference>
<sequence length="390" mass="43027">MKSFLVDQDGYYGEFGGAYVPEILHKCVEELQNTYLDVIESEDFKKEFDQLLRDYVGRPSPLYPARRLSEKYGCKMYLKREDLNHTGAHKINNTIGQILLARRMGKKRIIAETGAGQHGVATATVCALMNMECIVYMGKTDVERQHINVEKMKMLGATVVPVTSGNMTLKDATNEAIRDWCCHPSDTYYIIGSTVGPHPYPDMVARLQSVISEEIKKQLQEKEGRDYPDYLIACVGGGSNAAGTIYHYIDDERVRIVLAEAGGKGIETGMTAATIQLGKMGIIHGARTFVIQNEDGQIEEPYSISAGLDYPGIGPMHANLADKKRAMVLAVNDDEAIRAAYELTRLEGIIPALESAHALGALEKITFKPEDVVVLTVSGRGDKDIETYLG</sequence>